<feature type="chain" id="PRO_0000265329" description="Small ribosomal subunit protein uS19">
    <location>
        <begin position="1"/>
        <end position="92"/>
    </location>
</feature>
<name>RS19_BAUCH</name>
<protein>
    <recommendedName>
        <fullName evidence="1">Small ribosomal subunit protein uS19</fullName>
    </recommendedName>
    <alternativeName>
        <fullName evidence="2">30S ribosomal protein S19</fullName>
    </alternativeName>
</protein>
<evidence type="ECO:0000255" key="1">
    <source>
        <dbReference type="HAMAP-Rule" id="MF_00531"/>
    </source>
</evidence>
<evidence type="ECO:0000305" key="2"/>
<dbReference type="EMBL" id="CP000238">
    <property type="protein sequence ID" value="ABF13971.1"/>
    <property type="molecule type" value="Genomic_DNA"/>
</dbReference>
<dbReference type="RefSeq" id="WP_011520513.1">
    <property type="nucleotide sequence ID" value="NC_007984.1"/>
</dbReference>
<dbReference type="SMR" id="Q1LTD4"/>
<dbReference type="STRING" id="374463.BCI_0332"/>
<dbReference type="KEGG" id="bci:BCI_0332"/>
<dbReference type="HOGENOM" id="CLU_144911_0_1_6"/>
<dbReference type="OrthoDB" id="9797833at2"/>
<dbReference type="Proteomes" id="UP000002427">
    <property type="component" value="Chromosome"/>
</dbReference>
<dbReference type="GO" id="GO:0005737">
    <property type="term" value="C:cytoplasm"/>
    <property type="evidence" value="ECO:0007669"/>
    <property type="project" value="UniProtKB-ARBA"/>
</dbReference>
<dbReference type="GO" id="GO:0015935">
    <property type="term" value="C:small ribosomal subunit"/>
    <property type="evidence" value="ECO:0007669"/>
    <property type="project" value="InterPro"/>
</dbReference>
<dbReference type="GO" id="GO:0019843">
    <property type="term" value="F:rRNA binding"/>
    <property type="evidence" value="ECO:0007669"/>
    <property type="project" value="UniProtKB-UniRule"/>
</dbReference>
<dbReference type="GO" id="GO:0003735">
    <property type="term" value="F:structural constituent of ribosome"/>
    <property type="evidence" value="ECO:0007669"/>
    <property type="project" value="InterPro"/>
</dbReference>
<dbReference type="GO" id="GO:0000028">
    <property type="term" value="P:ribosomal small subunit assembly"/>
    <property type="evidence" value="ECO:0007669"/>
    <property type="project" value="TreeGrafter"/>
</dbReference>
<dbReference type="GO" id="GO:0006412">
    <property type="term" value="P:translation"/>
    <property type="evidence" value="ECO:0007669"/>
    <property type="project" value="UniProtKB-UniRule"/>
</dbReference>
<dbReference type="FunFam" id="3.30.860.10:FF:000001">
    <property type="entry name" value="30S ribosomal protein S19"/>
    <property type="match status" value="1"/>
</dbReference>
<dbReference type="Gene3D" id="3.30.860.10">
    <property type="entry name" value="30s Ribosomal Protein S19, Chain A"/>
    <property type="match status" value="1"/>
</dbReference>
<dbReference type="HAMAP" id="MF_00531">
    <property type="entry name" value="Ribosomal_uS19"/>
    <property type="match status" value="1"/>
</dbReference>
<dbReference type="InterPro" id="IPR002222">
    <property type="entry name" value="Ribosomal_uS19"/>
</dbReference>
<dbReference type="InterPro" id="IPR005732">
    <property type="entry name" value="Ribosomal_uS19_bac-type"/>
</dbReference>
<dbReference type="InterPro" id="IPR020934">
    <property type="entry name" value="Ribosomal_uS19_CS"/>
</dbReference>
<dbReference type="InterPro" id="IPR023575">
    <property type="entry name" value="Ribosomal_uS19_SF"/>
</dbReference>
<dbReference type="NCBIfam" id="TIGR01050">
    <property type="entry name" value="rpsS_bact"/>
    <property type="match status" value="1"/>
</dbReference>
<dbReference type="PANTHER" id="PTHR11880">
    <property type="entry name" value="RIBOSOMAL PROTEIN S19P FAMILY MEMBER"/>
    <property type="match status" value="1"/>
</dbReference>
<dbReference type="PANTHER" id="PTHR11880:SF8">
    <property type="entry name" value="SMALL RIBOSOMAL SUBUNIT PROTEIN US19M"/>
    <property type="match status" value="1"/>
</dbReference>
<dbReference type="Pfam" id="PF00203">
    <property type="entry name" value="Ribosomal_S19"/>
    <property type="match status" value="1"/>
</dbReference>
<dbReference type="PIRSF" id="PIRSF002144">
    <property type="entry name" value="Ribosomal_S19"/>
    <property type="match status" value="1"/>
</dbReference>
<dbReference type="PRINTS" id="PR00975">
    <property type="entry name" value="RIBOSOMALS19"/>
</dbReference>
<dbReference type="SUPFAM" id="SSF54570">
    <property type="entry name" value="Ribosomal protein S19"/>
    <property type="match status" value="1"/>
</dbReference>
<dbReference type="PROSITE" id="PS00323">
    <property type="entry name" value="RIBOSOMAL_S19"/>
    <property type="match status" value="1"/>
</dbReference>
<reference key="1">
    <citation type="journal article" date="2006" name="PLoS Biol.">
        <title>Metabolic complementarity and genomics of the dual bacterial symbiosis of sharpshooters.</title>
        <authorList>
            <person name="Wu D."/>
            <person name="Daugherty S.C."/>
            <person name="Van Aken S.E."/>
            <person name="Pai G.H."/>
            <person name="Watkins K.L."/>
            <person name="Khouri H."/>
            <person name="Tallon L.J."/>
            <person name="Zaborsky J.M."/>
            <person name="Dunbar H.E."/>
            <person name="Tran P.L."/>
            <person name="Moran N.A."/>
            <person name="Eisen J.A."/>
        </authorList>
    </citation>
    <scope>NUCLEOTIDE SEQUENCE [LARGE SCALE GENOMIC DNA]</scope>
</reference>
<gene>
    <name evidence="1" type="primary">rpsS</name>
    <name type="ordered locus">BCI_0332</name>
</gene>
<sequence length="92" mass="10577">MPRSLKKGPFIDLHLLQKVEKAVKTNDKKPIRTWSRRSTIFPQMIGLTIAVHNGRQHIPIFVADEMVGHKLGEFAPTRTYRGHTADKKAKKY</sequence>
<organism>
    <name type="scientific">Baumannia cicadellinicola subsp. Homalodisca coagulata</name>
    <dbReference type="NCBI Taxonomy" id="374463"/>
    <lineage>
        <taxon>Bacteria</taxon>
        <taxon>Pseudomonadati</taxon>
        <taxon>Pseudomonadota</taxon>
        <taxon>Gammaproteobacteria</taxon>
        <taxon>Candidatus Palibaumannia</taxon>
    </lineage>
</organism>
<accession>Q1LTD4</accession>
<comment type="function">
    <text evidence="1">Protein S19 forms a complex with S13 that binds strongly to the 16S ribosomal RNA.</text>
</comment>
<comment type="similarity">
    <text evidence="1">Belongs to the universal ribosomal protein uS19 family.</text>
</comment>
<proteinExistence type="inferred from homology"/>
<keyword id="KW-1185">Reference proteome</keyword>
<keyword id="KW-0687">Ribonucleoprotein</keyword>
<keyword id="KW-0689">Ribosomal protein</keyword>
<keyword id="KW-0694">RNA-binding</keyword>
<keyword id="KW-0699">rRNA-binding</keyword>